<name>CUTC_PARD8</name>
<comment type="subcellular location">
    <subcellularLocation>
        <location evidence="1">Cytoplasm</location>
    </subcellularLocation>
</comment>
<comment type="similarity">
    <text evidence="1">Belongs to the CutC family.</text>
</comment>
<comment type="caution">
    <text evidence="1">Once thought to be involved in copper homeostasis, experiments in E.coli have shown this is not the case.</text>
</comment>
<gene>
    <name evidence="1" type="primary">cutC</name>
    <name type="ordered locus">BDI_0272</name>
</gene>
<protein>
    <recommendedName>
        <fullName evidence="1">PF03932 family protein CutC</fullName>
    </recommendedName>
</protein>
<sequence>MKRIIEICANSAQSCVEAEAGGATRVELCAGIPEGGTTPSYGEIKTAKALTSKIDINVIIRPRGGDFLYTEAEVQSMLLDIELCKELKVHGVVFGCLTKDGDIDVPLMRRLIEAAKPLSVTCHRAFDVCRDPFTALEQLIELGCDRILTSGQQSDAVKGIPLIAELVKRADGRIIIMPGCGVRENNIGKIEAETGAKEFHTSARSIVYSKMEYRNENVPMGSSIVSSEFETVQTDREKVKAYI</sequence>
<organism>
    <name type="scientific">Parabacteroides distasonis (strain ATCC 8503 / DSM 20701 / CIP 104284 / JCM 5825 / NCTC 11152)</name>
    <dbReference type="NCBI Taxonomy" id="435591"/>
    <lineage>
        <taxon>Bacteria</taxon>
        <taxon>Pseudomonadati</taxon>
        <taxon>Bacteroidota</taxon>
        <taxon>Bacteroidia</taxon>
        <taxon>Bacteroidales</taxon>
        <taxon>Tannerellaceae</taxon>
        <taxon>Parabacteroides</taxon>
    </lineage>
</organism>
<feature type="chain" id="PRO_1000062257" description="PF03932 family protein CutC">
    <location>
        <begin position="1"/>
        <end position="243"/>
    </location>
</feature>
<reference key="1">
    <citation type="journal article" date="2007" name="PLoS Biol.">
        <title>Evolution of symbiotic bacteria in the distal human intestine.</title>
        <authorList>
            <person name="Xu J."/>
            <person name="Mahowald M.A."/>
            <person name="Ley R.E."/>
            <person name="Lozupone C.A."/>
            <person name="Hamady M."/>
            <person name="Martens E.C."/>
            <person name="Henrissat B."/>
            <person name="Coutinho P.M."/>
            <person name="Minx P."/>
            <person name="Latreille P."/>
            <person name="Cordum H."/>
            <person name="Van Brunt A."/>
            <person name="Kim K."/>
            <person name="Fulton R.S."/>
            <person name="Fulton L.A."/>
            <person name="Clifton S.W."/>
            <person name="Wilson R.K."/>
            <person name="Knight R.D."/>
            <person name="Gordon J.I."/>
        </authorList>
    </citation>
    <scope>NUCLEOTIDE SEQUENCE [LARGE SCALE GENOMIC DNA]</scope>
    <source>
        <strain>ATCC 8503 / DSM 20701 / CIP 104284 / JCM 5825 / NCTC 11152</strain>
    </source>
</reference>
<keyword id="KW-0963">Cytoplasm</keyword>
<keyword id="KW-1185">Reference proteome</keyword>
<dbReference type="EMBL" id="CP000140">
    <property type="protein sequence ID" value="ABR42057.1"/>
    <property type="molecule type" value="Genomic_DNA"/>
</dbReference>
<dbReference type="RefSeq" id="WP_005861801.1">
    <property type="nucleotide sequence ID" value="NZ_LR215978.1"/>
</dbReference>
<dbReference type="SMR" id="A6L8P3"/>
<dbReference type="STRING" id="435591.BDI_0272"/>
<dbReference type="PaxDb" id="435591-BDI_0272"/>
<dbReference type="KEGG" id="pdi:BDI_0272"/>
<dbReference type="eggNOG" id="COG3142">
    <property type="taxonomic scope" value="Bacteria"/>
</dbReference>
<dbReference type="HOGENOM" id="CLU_050555_3_1_10"/>
<dbReference type="BioCyc" id="PDIS435591:G1G5A-278-MONOMER"/>
<dbReference type="Proteomes" id="UP000000566">
    <property type="component" value="Chromosome"/>
</dbReference>
<dbReference type="GO" id="GO:0005737">
    <property type="term" value="C:cytoplasm"/>
    <property type="evidence" value="ECO:0007669"/>
    <property type="project" value="UniProtKB-SubCell"/>
</dbReference>
<dbReference type="GO" id="GO:0005507">
    <property type="term" value="F:copper ion binding"/>
    <property type="evidence" value="ECO:0007669"/>
    <property type="project" value="TreeGrafter"/>
</dbReference>
<dbReference type="FunFam" id="3.20.20.380:FF:000001">
    <property type="entry name" value="Copper homeostasis protein CutC"/>
    <property type="match status" value="1"/>
</dbReference>
<dbReference type="Gene3D" id="3.20.20.380">
    <property type="entry name" value="Copper homeostasis (CutC) domain"/>
    <property type="match status" value="1"/>
</dbReference>
<dbReference type="HAMAP" id="MF_00795">
    <property type="entry name" value="CutC"/>
    <property type="match status" value="1"/>
</dbReference>
<dbReference type="InterPro" id="IPR005627">
    <property type="entry name" value="CutC-like"/>
</dbReference>
<dbReference type="InterPro" id="IPR036822">
    <property type="entry name" value="CutC-like_dom_sf"/>
</dbReference>
<dbReference type="PANTHER" id="PTHR12598">
    <property type="entry name" value="COPPER HOMEOSTASIS PROTEIN CUTC"/>
    <property type="match status" value="1"/>
</dbReference>
<dbReference type="PANTHER" id="PTHR12598:SF0">
    <property type="entry name" value="COPPER HOMEOSTASIS PROTEIN CUTC HOMOLOG"/>
    <property type="match status" value="1"/>
</dbReference>
<dbReference type="Pfam" id="PF03932">
    <property type="entry name" value="CutC"/>
    <property type="match status" value="1"/>
</dbReference>
<dbReference type="SUPFAM" id="SSF110395">
    <property type="entry name" value="CutC-like"/>
    <property type="match status" value="1"/>
</dbReference>
<evidence type="ECO:0000255" key="1">
    <source>
        <dbReference type="HAMAP-Rule" id="MF_00795"/>
    </source>
</evidence>
<accession>A6L8P3</accession>
<proteinExistence type="inferred from homology"/>